<accession>A7FQ67</accession>
<organism>
    <name type="scientific">Clostridium botulinum (strain ATCC 19397 / Type A)</name>
    <dbReference type="NCBI Taxonomy" id="441770"/>
    <lineage>
        <taxon>Bacteria</taxon>
        <taxon>Bacillati</taxon>
        <taxon>Bacillota</taxon>
        <taxon>Clostridia</taxon>
        <taxon>Eubacteriales</taxon>
        <taxon>Clostridiaceae</taxon>
        <taxon>Clostridium</taxon>
    </lineage>
</organism>
<reference key="1">
    <citation type="journal article" date="2007" name="PLoS ONE">
        <title>Analysis of the neurotoxin complex genes in Clostridium botulinum A1-A4 and B1 strains: BoNT/A3, /Ba4 and /B1 clusters are located within plasmids.</title>
        <authorList>
            <person name="Smith T.J."/>
            <person name="Hill K.K."/>
            <person name="Foley B.T."/>
            <person name="Detter J.C."/>
            <person name="Munk A.C."/>
            <person name="Bruce D.C."/>
            <person name="Doggett N.A."/>
            <person name="Smith L.A."/>
            <person name="Marks J.D."/>
            <person name="Xie G."/>
            <person name="Brettin T.S."/>
        </authorList>
    </citation>
    <scope>NUCLEOTIDE SEQUENCE [LARGE SCALE GENOMIC DNA]</scope>
    <source>
        <strain>ATCC 19397 / Type A</strain>
    </source>
</reference>
<sequence length="198" mass="21936">MDFYPIAIEKLIEEFAKLPGIGYKTAQRLTLYVLNLPKEEVKEFSEALVKARGTIKYCSVCGNFTDKDPCAICSNPNRNKSIICVIEQPKDIMSMEKIREYNGVYHVLHGNISPMAGRGPEDIKLKELIRRIDGSVNEVIVATNPNVEGEATAMYISKILKPLGVKVTRIAHGVPVGGDLEYADEVTLAKALEGRIEL</sequence>
<comment type="function">
    <text evidence="1">May play a role in DNA repair. It seems to be involved in an RecBC-independent recombinational process of DNA repair. It may act with RecF and RecO.</text>
</comment>
<comment type="similarity">
    <text evidence="1">Belongs to the RecR family.</text>
</comment>
<gene>
    <name evidence="1" type="primary">recR</name>
    <name type="ordered locus">CLB_0044</name>
</gene>
<keyword id="KW-0227">DNA damage</keyword>
<keyword id="KW-0233">DNA recombination</keyword>
<keyword id="KW-0234">DNA repair</keyword>
<keyword id="KW-0479">Metal-binding</keyword>
<keyword id="KW-0862">Zinc</keyword>
<keyword id="KW-0863">Zinc-finger</keyword>
<protein>
    <recommendedName>
        <fullName evidence="1">Recombination protein RecR</fullName>
    </recommendedName>
</protein>
<evidence type="ECO:0000255" key="1">
    <source>
        <dbReference type="HAMAP-Rule" id="MF_00017"/>
    </source>
</evidence>
<proteinExistence type="inferred from homology"/>
<name>RECR_CLOB1</name>
<feature type="chain" id="PRO_1000001527" description="Recombination protein RecR">
    <location>
        <begin position="1"/>
        <end position="198"/>
    </location>
</feature>
<feature type="domain" description="Toprim" evidence="1">
    <location>
        <begin position="81"/>
        <end position="175"/>
    </location>
</feature>
<feature type="zinc finger region" description="C4-type" evidence="1">
    <location>
        <begin position="58"/>
        <end position="73"/>
    </location>
</feature>
<dbReference type="EMBL" id="CP000726">
    <property type="protein sequence ID" value="ABS34262.1"/>
    <property type="molecule type" value="Genomic_DNA"/>
</dbReference>
<dbReference type="RefSeq" id="WP_003359478.1">
    <property type="nucleotide sequence ID" value="NC_009697.1"/>
</dbReference>
<dbReference type="SMR" id="A7FQ67"/>
<dbReference type="GeneID" id="5187947"/>
<dbReference type="KEGG" id="cba:CLB_0044"/>
<dbReference type="HOGENOM" id="CLU_060739_1_0_9"/>
<dbReference type="GO" id="GO:0003677">
    <property type="term" value="F:DNA binding"/>
    <property type="evidence" value="ECO:0007669"/>
    <property type="project" value="UniProtKB-UniRule"/>
</dbReference>
<dbReference type="GO" id="GO:0008270">
    <property type="term" value="F:zinc ion binding"/>
    <property type="evidence" value="ECO:0007669"/>
    <property type="project" value="UniProtKB-KW"/>
</dbReference>
<dbReference type="GO" id="GO:0006310">
    <property type="term" value="P:DNA recombination"/>
    <property type="evidence" value="ECO:0007669"/>
    <property type="project" value="UniProtKB-UniRule"/>
</dbReference>
<dbReference type="GO" id="GO:0006281">
    <property type="term" value="P:DNA repair"/>
    <property type="evidence" value="ECO:0007669"/>
    <property type="project" value="UniProtKB-UniRule"/>
</dbReference>
<dbReference type="CDD" id="cd01025">
    <property type="entry name" value="TOPRIM_recR"/>
    <property type="match status" value="1"/>
</dbReference>
<dbReference type="Gene3D" id="3.30.60.80">
    <property type="match status" value="1"/>
</dbReference>
<dbReference type="Gene3D" id="3.40.1360.10">
    <property type="match status" value="1"/>
</dbReference>
<dbReference type="Gene3D" id="6.10.250.240">
    <property type="match status" value="1"/>
</dbReference>
<dbReference type="Gene3D" id="1.10.8.420">
    <property type="entry name" value="RecR Domain 1"/>
    <property type="match status" value="1"/>
</dbReference>
<dbReference type="HAMAP" id="MF_00017">
    <property type="entry name" value="RecR"/>
    <property type="match status" value="1"/>
</dbReference>
<dbReference type="InterPro" id="IPR000093">
    <property type="entry name" value="DNA_Rcmb_RecR"/>
</dbReference>
<dbReference type="InterPro" id="IPR023627">
    <property type="entry name" value="Rcmb_RecR"/>
</dbReference>
<dbReference type="InterPro" id="IPR015967">
    <property type="entry name" value="Rcmb_RecR_Znf"/>
</dbReference>
<dbReference type="InterPro" id="IPR006171">
    <property type="entry name" value="TOPRIM_dom"/>
</dbReference>
<dbReference type="InterPro" id="IPR034137">
    <property type="entry name" value="TOPRIM_RecR"/>
</dbReference>
<dbReference type="NCBIfam" id="TIGR00615">
    <property type="entry name" value="recR"/>
    <property type="match status" value="1"/>
</dbReference>
<dbReference type="PANTHER" id="PTHR30446">
    <property type="entry name" value="RECOMBINATION PROTEIN RECR"/>
    <property type="match status" value="1"/>
</dbReference>
<dbReference type="PANTHER" id="PTHR30446:SF0">
    <property type="entry name" value="RECOMBINATION PROTEIN RECR"/>
    <property type="match status" value="1"/>
</dbReference>
<dbReference type="Pfam" id="PF21175">
    <property type="entry name" value="RecR_C"/>
    <property type="match status" value="1"/>
</dbReference>
<dbReference type="Pfam" id="PF21176">
    <property type="entry name" value="RecR_HhH"/>
    <property type="match status" value="1"/>
</dbReference>
<dbReference type="Pfam" id="PF02132">
    <property type="entry name" value="RecR_ZnF"/>
    <property type="match status" value="1"/>
</dbReference>
<dbReference type="Pfam" id="PF13662">
    <property type="entry name" value="Toprim_4"/>
    <property type="match status" value="1"/>
</dbReference>
<dbReference type="SMART" id="SM00493">
    <property type="entry name" value="TOPRIM"/>
    <property type="match status" value="1"/>
</dbReference>
<dbReference type="SUPFAM" id="SSF111304">
    <property type="entry name" value="Recombination protein RecR"/>
    <property type="match status" value="1"/>
</dbReference>
<dbReference type="PROSITE" id="PS01300">
    <property type="entry name" value="RECR"/>
    <property type="match status" value="1"/>
</dbReference>
<dbReference type="PROSITE" id="PS50880">
    <property type="entry name" value="TOPRIM"/>
    <property type="match status" value="1"/>
</dbReference>